<gene>
    <name evidence="1" type="primary">gpmA</name>
    <name type="ordered locus">lin2308</name>
</gene>
<reference key="1">
    <citation type="journal article" date="2001" name="Science">
        <title>Comparative genomics of Listeria species.</title>
        <authorList>
            <person name="Glaser P."/>
            <person name="Frangeul L."/>
            <person name="Buchrieser C."/>
            <person name="Rusniok C."/>
            <person name="Amend A."/>
            <person name="Baquero F."/>
            <person name="Berche P."/>
            <person name="Bloecker H."/>
            <person name="Brandt P."/>
            <person name="Chakraborty T."/>
            <person name="Charbit A."/>
            <person name="Chetouani F."/>
            <person name="Couve E."/>
            <person name="de Daruvar A."/>
            <person name="Dehoux P."/>
            <person name="Domann E."/>
            <person name="Dominguez-Bernal G."/>
            <person name="Duchaud E."/>
            <person name="Durant L."/>
            <person name="Dussurget O."/>
            <person name="Entian K.-D."/>
            <person name="Fsihi H."/>
            <person name="Garcia-del Portillo F."/>
            <person name="Garrido P."/>
            <person name="Gautier L."/>
            <person name="Goebel W."/>
            <person name="Gomez-Lopez N."/>
            <person name="Hain T."/>
            <person name="Hauf J."/>
            <person name="Jackson D."/>
            <person name="Jones L.-M."/>
            <person name="Kaerst U."/>
            <person name="Kreft J."/>
            <person name="Kuhn M."/>
            <person name="Kunst F."/>
            <person name="Kurapkat G."/>
            <person name="Madueno E."/>
            <person name="Maitournam A."/>
            <person name="Mata Vicente J."/>
            <person name="Ng E."/>
            <person name="Nedjari H."/>
            <person name="Nordsiek G."/>
            <person name="Novella S."/>
            <person name="de Pablos B."/>
            <person name="Perez-Diaz J.-C."/>
            <person name="Purcell R."/>
            <person name="Remmel B."/>
            <person name="Rose M."/>
            <person name="Schlueter T."/>
            <person name="Simoes N."/>
            <person name="Tierrez A."/>
            <person name="Vazquez-Boland J.-A."/>
            <person name="Voss H."/>
            <person name="Wehland J."/>
            <person name="Cossart P."/>
        </authorList>
    </citation>
    <scope>NUCLEOTIDE SEQUENCE [LARGE SCALE GENOMIC DNA]</scope>
    <source>
        <strain>ATCC BAA-680 / CLIP 11262</strain>
    </source>
</reference>
<organism>
    <name type="scientific">Listeria innocua serovar 6a (strain ATCC BAA-680 / CLIP 11262)</name>
    <dbReference type="NCBI Taxonomy" id="272626"/>
    <lineage>
        <taxon>Bacteria</taxon>
        <taxon>Bacillati</taxon>
        <taxon>Bacillota</taxon>
        <taxon>Bacilli</taxon>
        <taxon>Bacillales</taxon>
        <taxon>Listeriaceae</taxon>
        <taxon>Listeria</taxon>
    </lineage>
</organism>
<accession>Q929G8</accession>
<evidence type="ECO:0000255" key="1">
    <source>
        <dbReference type="HAMAP-Rule" id="MF_01039"/>
    </source>
</evidence>
<name>GPMA_LISIN</name>
<sequence length="229" mass="26418">MKLVLIRHGQSEWNKLNLFTGWHDVDLSEEGVVEAMTAGKRIKEAGLEFDVAFTSVLTRAIKTLNYVLEESDQMWVPVHKSWRLNERHYGALQGLNKQETAEKYGADQVQKWRRSYDTLPPLLEENDERQAKNDRRYQLLDTHAIPSGENLKVTLERVIPYWMDTIAPEIKAGRRVVIAAHGNSLRALVKFLEGISDDEIMELEIPTGVPLVYELNDDLKPVNKYYLDK</sequence>
<proteinExistence type="inferred from homology"/>
<dbReference type="EC" id="5.4.2.11" evidence="1"/>
<dbReference type="EMBL" id="AL596171">
    <property type="protein sequence ID" value="CAC97536.1"/>
    <property type="molecule type" value="Genomic_DNA"/>
</dbReference>
<dbReference type="PIR" id="AH1720">
    <property type="entry name" value="AH1720"/>
</dbReference>
<dbReference type="RefSeq" id="WP_003763533.1">
    <property type="nucleotide sequence ID" value="NC_003212.1"/>
</dbReference>
<dbReference type="SMR" id="Q929G8"/>
<dbReference type="STRING" id="272626.gene:17566670"/>
<dbReference type="GeneID" id="93235653"/>
<dbReference type="KEGG" id="lin:lin2308"/>
<dbReference type="eggNOG" id="COG0588">
    <property type="taxonomic scope" value="Bacteria"/>
</dbReference>
<dbReference type="HOGENOM" id="CLU_033323_1_1_9"/>
<dbReference type="OrthoDB" id="9781415at2"/>
<dbReference type="UniPathway" id="UPA00109">
    <property type="reaction ID" value="UER00186"/>
</dbReference>
<dbReference type="Proteomes" id="UP000002513">
    <property type="component" value="Chromosome"/>
</dbReference>
<dbReference type="GO" id="GO:0004619">
    <property type="term" value="F:phosphoglycerate mutase activity"/>
    <property type="evidence" value="ECO:0007669"/>
    <property type="project" value="UniProtKB-EC"/>
</dbReference>
<dbReference type="GO" id="GO:0006094">
    <property type="term" value="P:gluconeogenesis"/>
    <property type="evidence" value="ECO:0007669"/>
    <property type="project" value="UniProtKB-UniRule"/>
</dbReference>
<dbReference type="GO" id="GO:0006096">
    <property type="term" value="P:glycolytic process"/>
    <property type="evidence" value="ECO:0007669"/>
    <property type="project" value="UniProtKB-UniRule"/>
</dbReference>
<dbReference type="CDD" id="cd07067">
    <property type="entry name" value="HP_PGM_like"/>
    <property type="match status" value="1"/>
</dbReference>
<dbReference type="FunFam" id="3.40.50.1240:FF:000003">
    <property type="entry name" value="2,3-bisphosphoglycerate-dependent phosphoglycerate mutase"/>
    <property type="match status" value="1"/>
</dbReference>
<dbReference type="Gene3D" id="3.40.50.1240">
    <property type="entry name" value="Phosphoglycerate mutase-like"/>
    <property type="match status" value="1"/>
</dbReference>
<dbReference type="HAMAP" id="MF_01039">
    <property type="entry name" value="PGAM_GpmA"/>
    <property type="match status" value="1"/>
</dbReference>
<dbReference type="InterPro" id="IPR013078">
    <property type="entry name" value="His_Pase_superF_clade-1"/>
</dbReference>
<dbReference type="InterPro" id="IPR029033">
    <property type="entry name" value="His_PPase_superfam"/>
</dbReference>
<dbReference type="InterPro" id="IPR001345">
    <property type="entry name" value="PG/BPGM_mutase_AS"/>
</dbReference>
<dbReference type="InterPro" id="IPR005952">
    <property type="entry name" value="Phosphogly_mut1"/>
</dbReference>
<dbReference type="NCBIfam" id="TIGR01258">
    <property type="entry name" value="pgm_1"/>
    <property type="match status" value="1"/>
</dbReference>
<dbReference type="NCBIfam" id="NF010713">
    <property type="entry name" value="PRK14115.1"/>
    <property type="match status" value="1"/>
</dbReference>
<dbReference type="PANTHER" id="PTHR11931">
    <property type="entry name" value="PHOSPHOGLYCERATE MUTASE"/>
    <property type="match status" value="1"/>
</dbReference>
<dbReference type="Pfam" id="PF00300">
    <property type="entry name" value="His_Phos_1"/>
    <property type="match status" value="2"/>
</dbReference>
<dbReference type="PIRSF" id="PIRSF000709">
    <property type="entry name" value="6PFK_2-Ptase"/>
    <property type="match status" value="1"/>
</dbReference>
<dbReference type="SMART" id="SM00855">
    <property type="entry name" value="PGAM"/>
    <property type="match status" value="1"/>
</dbReference>
<dbReference type="SUPFAM" id="SSF53254">
    <property type="entry name" value="Phosphoglycerate mutase-like"/>
    <property type="match status" value="1"/>
</dbReference>
<dbReference type="PROSITE" id="PS00175">
    <property type="entry name" value="PG_MUTASE"/>
    <property type="match status" value="1"/>
</dbReference>
<comment type="function">
    <text evidence="1">Catalyzes the interconversion of 2-phosphoglycerate and 3-phosphoglycerate.</text>
</comment>
<comment type="catalytic activity">
    <reaction evidence="1">
        <text>(2R)-2-phosphoglycerate = (2R)-3-phosphoglycerate</text>
        <dbReference type="Rhea" id="RHEA:15901"/>
        <dbReference type="ChEBI" id="CHEBI:58272"/>
        <dbReference type="ChEBI" id="CHEBI:58289"/>
        <dbReference type="EC" id="5.4.2.11"/>
    </reaction>
</comment>
<comment type="pathway">
    <text evidence="1">Carbohydrate degradation; glycolysis; pyruvate from D-glyceraldehyde 3-phosphate: step 3/5.</text>
</comment>
<comment type="similarity">
    <text evidence="1">Belongs to the phosphoglycerate mutase family. BPG-dependent PGAM subfamily.</text>
</comment>
<protein>
    <recommendedName>
        <fullName evidence="1">2,3-bisphosphoglycerate-dependent phosphoglycerate mutase</fullName>
        <shortName evidence="1">BPG-dependent PGAM</shortName>
        <shortName evidence="1">PGAM</shortName>
        <shortName evidence="1">Phosphoglyceromutase</shortName>
        <shortName evidence="1">dPGM</shortName>
        <ecNumber evidence="1">5.4.2.11</ecNumber>
    </recommendedName>
</protein>
<feature type="chain" id="PRO_0000179888" description="2,3-bisphosphoglycerate-dependent phosphoglycerate mutase">
    <location>
        <begin position="1"/>
        <end position="229"/>
    </location>
</feature>
<feature type="active site" description="Tele-phosphohistidine intermediate" evidence="1">
    <location>
        <position position="8"/>
    </location>
</feature>
<feature type="active site" description="Proton donor/acceptor" evidence="1">
    <location>
        <position position="86"/>
    </location>
</feature>
<feature type="binding site" evidence="1">
    <location>
        <begin position="7"/>
        <end position="14"/>
    </location>
    <ligand>
        <name>substrate</name>
    </ligand>
</feature>
<feature type="binding site" evidence="1">
    <location>
        <begin position="20"/>
        <end position="21"/>
    </location>
    <ligand>
        <name>substrate</name>
    </ligand>
</feature>
<feature type="binding site" evidence="1">
    <location>
        <position position="59"/>
    </location>
    <ligand>
        <name>substrate</name>
    </ligand>
</feature>
<feature type="binding site" evidence="1">
    <location>
        <begin position="86"/>
        <end position="89"/>
    </location>
    <ligand>
        <name>substrate</name>
    </ligand>
</feature>
<feature type="binding site" evidence="1">
    <location>
        <position position="97"/>
    </location>
    <ligand>
        <name>substrate</name>
    </ligand>
</feature>
<feature type="binding site" evidence="1">
    <location>
        <begin position="113"/>
        <end position="114"/>
    </location>
    <ligand>
        <name>substrate</name>
    </ligand>
</feature>
<feature type="binding site" evidence="1">
    <location>
        <begin position="182"/>
        <end position="183"/>
    </location>
    <ligand>
        <name>substrate</name>
    </ligand>
</feature>
<feature type="site" description="Transition state stabilizer" evidence="1">
    <location>
        <position position="181"/>
    </location>
</feature>
<keyword id="KW-0312">Gluconeogenesis</keyword>
<keyword id="KW-0324">Glycolysis</keyword>
<keyword id="KW-0413">Isomerase</keyword>